<protein>
    <recommendedName>
        <fullName evidence="1">Formate--tetrahydrofolate ligase</fullName>
        <ecNumber evidence="1">6.3.4.3</ecNumber>
    </recommendedName>
    <alternativeName>
        <fullName evidence="1">Formyltetrahydrofolate synthetase</fullName>
        <shortName evidence="1">FHS</shortName>
        <shortName evidence="1">FTHFS</shortName>
    </alternativeName>
</protein>
<accession>Q5V5Y2</accession>
<sequence length="553" mass="59251">MEPIWELVEPWGLGLDDLQYFGEYTAKVKQHAIERLREQAENREQNLVLVTGMTPTPKGEGKTVTTVGLGQTLNHVGEEAMIAIREPSLGPVFGVKGGAAGGGRSQVLPMEDINLHFTGDLHALTSAHNLIAAMLDAKISQGDDLNIDINNVSWPRAIDMNDRALRETVVGLGGKTGGTPREDSFILTAASELMAVLCLASDIGDLKERVSRIIVAYDEDGDPVTVEDIEATGPATMLLRDAIKPNVVQTIEGTPALVHGGPFANIAHGTNSLVADKTAFGMGDYLVTEAGFGSDLGAEKFMDVVCRKGDMTPNAVVLVASVRALKYHGLNQWPVDYDEIGEAGVEAVEAGFSNLDKHARNLQKFGVPVVVSVNRFPDDTDEEVQAVLDHCREDLGVRAAESNVFSDGSEGGVDLAENVIEATEESNEEDFRMLYDDDDSIKEKIHTVATEIYGADDVKYTGGALDDIEQMNDLDFDDYPVVMSKTFHSLSDDASQKGAPEGWELEISEVYPSAGAGFLVALTADALTMPGLPARPAAADMDIDGDGNISGLF</sequence>
<reference key="1">
    <citation type="journal article" date="2004" name="Genome Res.">
        <title>Genome sequence of Haloarcula marismortui: a halophilic archaeon from the Dead Sea.</title>
        <authorList>
            <person name="Baliga N.S."/>
            <person name="Bonneau R."/>
            <person name="Facciotti M.T."/>
            <person name="Pan M."/>
            <person name="Glusman G."/>
            <person name="Deutsch E.W."/>
            <person name="Shannon P."/>
            <person name="Chiu Y."/>
            <person name="Weng R.S."/>
            <person name="Gan R.R."/>
            <person name="Hung P."/>
            <person name="Date S.V."/>
            <person name="Marcotte E."/>
            <person name="Hood L."/>
            <person name="Ng W.V."/>
        </authorList>
    </citation>
    <scope>NUCLEOTIDE SEQUENCE [LARGE SCALE GENOMIC DNA]</scope>
    <source>
        <strain>ATCC 43049 / DSM 3752 / JCM 8966 / VKM B-1809</strain>
    </source>
</reference>
<organism>
    <name type="scientific">Haloarcula marismortui (strain ATCC 43049 / DSM 3752 / JCM 8966 / VKM B-1809)</name>
    <name type="common">Halobacterium marismortui</name>
    <dbReference type="NCBI Taxonomy" id="272569"/>
    <lineage>
        <taxon>Archaea</taxon>
        <taxon>Methanobacteriati</taxon>
        <taxon>Methanobacteriota</taxon>
        <taxon>Stenosarchaea group</taxon>
        <taxon>Halobacteria</taxon>
        <taxon>Halobacteriales</taxon>
        <taxon>Haloarculaceae</taxon>
        <taxon>Haloarcula</taxon>
    </lineage>
</organism>
<name>FTHS_HALMA</name>
<evidence type="ECO:0000255" key="1">
    <source>
        <dbReference type="HAMAP-Rule" id="MF_01543"/>
    </source>
</evidence>
<evidence type="ECO:0000305" key="2"/>
<feature type="chain" id="PRO_0000199413" description="Formate--tetrahydrofolate ligase">
    <location>
        <begin position="1"/>
        <end position="553"/>
    </location>
</feature>
<feature type="binding site" evidence="1">
    <location>
        <begin position="56"/>
        <end position="63"/>
    </location>
    <ligand>
        <name>ATP</name>
        <dbReference type="ChEBI" id="CHEBI:30616"/>
    </ligand>
</feature>
<dbReference type="EC" id="6.3.4.3" evidence="1"/>
<dbReference type="EMBL" id="AY596296">
    <property type="protein sequence ID" value="AAV45070.1"/>
    <property type="status" value="ALT_INIT"/>
    <property type="molecule type" value="Genomic_DNA"/>
</dbReference>
<dbReference type="SMR" id="Q5V5Y2"/>
<dbReference type="EnsemblBacteria" id="AAV45070">
    <property type="protein sequence ID" value="AAV45070"/>
    <property type="gene ID" value="pNG7380"/>
</dbReference>
<dbReference type="KEGG" id="hma:pNG7380"/>
<dbReference type="PATRIC" id="fig|272569.17.peg.800"/>
<dbReference type="HOGENOM" id="CLU_003601_3_3_2"/>
<dbReference type="UniPathway" id="UPA00193"/>
<dbReference type="Proteomes" id="UP000001169">
    <property type="component" value="Plasmid pNG700"/>
</dbReference>
<dbReference type="GO" id="GO:0005524">
    <property type="term" value="F:ATP binding"/>
    <property type="evidence" value="ECO:0007669"/>
    <property type="project" value="UniProtKB-UniRule"/>
</dbReference>
<dbReference type="GO" id="GO:0004329">
    <property type="term" value="F:formate-tetrahydrofolate ligase activity"/>
    <property type="evidence" value="ECO:0007669"/>
    <property type="project" value="UniProtKB-UniRule"/>
</dbReference>
<dbReference type="GO" id="GO:0035999">
    <property type="term" value="P:tetrahydrofolate interconversion"/>
    <property type="evidence" value="ECO:0007669"/>
    <property type="project" value="UniProtKB-UniRule"/>
</dbReference>
<dbReference type="CDD" id="cd00477">
    <property type="entry name" value="FTHFS"/>
    <property type="match status" value="1"/>
</dbReference>
<dbReference type="FunFam" id="3.30.1510.10:FF:000001">
    <property type="entry name" value="Formate--tetrahydrofolate ligase"/>
    <property type="match status" value="1"/>
</dbReference>
<dbReference type="Gene3D" id="3.30.1510.10">
    <property type="entry name" value="Domain 2, N(10)-formyltetrahydrofolate synthetase"/>
    <property type="match status" value="1"/>
</dbReference>
<dbReference type="Gene3D" id="3.10.410.10">
    <property type="entry name" value="Formyltetrahydrofolate synthetase, domain 3"/>
    <property type="match status" value="1"/>
</dbReference>
<dbReference type="Gene3D" id="3.40.50.300">
    <property type="entry name" value="P-loop containing nucleotide triphosphate hydrolases"/>
    <property type="match status" value="1"/>
</dbReference>
<dbReference type="HAMAP" id="MF_01543">
    <property type="entry name" value="FTHFS"/>
    <property type="match status" value="1"/>
</dbReference>
<dbReference type="InterPro" id="IPR000559">
    <property type="entry name" value="Formate_THF_ligase"/>
</dbReference>
<dbReference type="InterPro" id="IPR020628">
    <property type="entry name" value="Formate_THF_ligase_CS"/>
</dbReference>
<dbReference type="InterPro" id="IPR027417">
    <property type="entry name" value="P-loop_NTPase"/>
</dbReference>
<dbReference type="NCBIfam" id="NF010030">
    <property type="entry name" value="PRK13505.1"/>
    <property type="match status" value="1"/>
</dbReference>
<dbReference type="Pfam" id="PF01268">
    <property type="entry name" value="FTHFS"/>
    <property type="match status" value="1"/>
</dbReference>
<dbReference type="SUPFAM" id="SSF52540">
    <property type="entry name" value="P-loop containing nucleoside triphosphate hydrolases"/>
    <property type="match status" value="1"/>
</dbReference>
<dbReference type="PROSITE" id="PS00721">
    <property type="entry name" value="FTHFS_1"/>
    <property type="match status" value="1"/>
</dbReference>
<dbReference type="PROSITE" id="PS00722">
    <property type="entry name" value="FTHFS_2"/>
    <property type="match status" value="1"/>
</dbReference>
<proteinExistence type="inferred from homology"/>
<comment type="catalytic activity">
    <reaction evidence="1">
        <text>(6S)-5,6,7,8-tetrahydrofolate + formate + ATP = (6R)-10-formyltetrahydrofolate + ADP + phosphate</text>
        <dbReference type="Rhea" id="RHEA:20221"/>
        <dbReference type="ChEBI" id="CHEBI:15740"/>
        <dbReference type="ChEBI" id="CHEBI:30616"/>
        <dbReference type="ChEBI" id="CHEBI:43474"/>
        <dbReference type="ChEBI" id="CHEBI:57453"/>
        <dbReference type="ChEBI" id="CHEBI:195366"/>
        <dbReference type="ChEBI" id="CHEBI:456216"/>
        <dbReference type="EC" id="6.3.4.3"/>
    </reaction>
</comment>
<comment type="pathway">
    <text evidence="1">One-carbon metabolism; tetrahydrofolate interconversion.</text>
</comment>
<comment type="similarity">
    <text evidence="1">Belongs to the formate--tetrahydrofolate ligase family.</text>
</comment>
<comment type="sequence caution" evidence="2">
    <conflict type="erroneous initiation">
        <sequence resource="EMBL-CDS" id="AAV45070"/>
    </conflict>
</comment>
<gene>
    <name evidence="1" type="primary">fhs</name>
    <name type="ordered locus">pNG7380</name>
</gene>
<geneLocation type="plasmid">
    <name>pNG700</name>
</geneLocation>
<keyword id="KW-0067">ATP-binding</keyword>
<keyword id="KW-0436">Ligase</keyword>
<keyword id="KW-0547">Nucleotide-binding</keyword>
<keyword id="KW-0554">One-carbon metabolism</keyword>
<keyword id="KW-0614">Plasmid</keyword>
<keyword id="KW-1185">Reference proteome</keyword>